<reference key="1">
    <citation type="journal article" date="2003" name="Proc. Natl. Acad. Sci. U.S.A.">
        <title>The complete genome sequence of the Arabidopsis and tomato pathogen Pseudomonas syringae pv. tomato DC3000.</title>
        <authorList>
            <person name="Buell C.R."/>
            <person name="Joardar V."/>
            <person name="Lindeberg M."/>
            <person name="Selengut J."/>
            <person name="Paulsen I.T."/>
            <person name="Gwinn M.L."/>
            <person name="Dodson R.J."/>
            <person name="DeBoy R.T."/>
            <person name="Durkin A.S."/>
            <person name="Kolonay J.F."/>
            <person name="Madupu R."/>
            <person name="Daugherty S.C."/>
            <person name="Brinkac L.M."/>
            <person name="Beanan M.J."/>
            <person name="Haft D.H."/>
            <person name="Nelson W.C."/>
            <person name="Davidsen T.M."/>
            <person name="Zafar N."/>
            <person name="Zhou L."/>
            <person name="Liu J."/>
            <person name="Yuan Q."/>
            <person name="Khouri H.M."/>
            <person name="Fedorova N.B."/>
            <person name="Tran B."/>
            <person name="Russell D."/>
            <person name="Berry K.J."/>
            <person name="Utterback T.R."/>
            <person name="Van Aken S.E."/>
            <person name="Feldblyum T.V."/>
            <person name="D'Ascenzo M."/>
            <person name="Deng W.-L."/>
            <person name="Ramos A.R."/>
            <person name="Alfano J.R."/>
            <person name="Cartinhour S."/>
            <person name="Chatterjee A.K."/>
            <person name="Delaney T.P."/>
            <person name="Lazarowitz S.G."/>
            <person name="Martin G.B."/>
            <person name="Schneider D.J."/>
            <person name="Tang X."/>
            <person name="Bender C.L."/>
            <person name="White O."/>
            <person name="Fraser C.M."/>
            <person name="Collmer A."/>
        </authorList>
    </citation>
    <scope>NUCLEOTIDE SEQUENCE [LARGE SCALE GENOMIC DNA]</scope>
    <source>
        <strain>ATCC BAA-871 / DC3000</strain>
    </source>
</reference>
<sequence>MPKRTDIKSILILGAGPIVIGQACEFDYSGAQACKALREEGYRVILVNSNPATIMTDPAMADATYIEPIKWQTVAKIIEKERPDALLPTMGGQTALNCALDLEREGVLEKFGVEMIGANADTIDKAEDRSRFDKAMKSIGLACPRSGIAHSMEEANAVLEKLGFPCIIRPSFTMGGTGGGIAYNREEFEEICARGLDLSPTKELLIDESLIGWKEYEMEVVRDKKDNCIIVCSIENFDPMGVHTGDSITVAPAQTLTDKEYQILRNASLAVLREIGVETGGSNVQFGICPDTGRMVVIEMNPRVSRSSALASKATGFPIARVAAKLAVGYTLDELSNEITGGKTPASFEPSIDYVVTKLPRFAFEKFAKADARLTTQMKSVGEVMAIGRTFQESLQKALRGLEVGVCGLDPKLDLSHPESMSTLKRELTVPGAERIWYVADAFRAGMTVEEIFAMNMIDPWFLVQIEDLVKDEEKIKTLGLSAIDRDLMYRLKRKGFSDARLAKLVGVTEKNLRTHRHKLDVFPVYKRVDTCAAEFATDTAYLYSTYEEECEANPSTRDKIMILGGGPNRIGQGIEFDYCCVHAALALREDGYETIMVNCNPETVSTDYDTSDRLYFEPVTLEDVLEIVRVEKPKGVIVQYGGQTPLKLARALEAAGVPIIGTSPDAIDRAEDRERFQQMVERLNLRQPPNATVRSEDEAIRAAAKIGYPLVVRPSYVLGGRAMEIVYQEDELKRYLREAVQVSNDSPVLLDHFLNCAIEMDVDAVCDGTDVVIGAIMQHIEQAGVHSGDSACSLPPYSLPAHIQDEMREQVKKMALELGVVGLMNVQLALQGEDIYVIEVNPRASRTVPFVSKCIGVSLAMIAARVMAGKTLKELNFTKEIIPNFYSVKEAVFPFAKFPGVDPILGPEMKSTGEVMGVGDTFGEAFAKAQMGASEVLPTGGTAFISVRDDDKPLVEAVARDLINLGFEIVATAGTAKLIEAAGLKVRRVNKVTEGRPHVVDMIKNDEVTLIINTTEGRQSIADSYSIRRNALQHKIYCTTTIAAGEAICEALKFGPEKTVRRLQDLHAGLKA</sequence>
<dbReference type="EC" id="6.3.4.16" evidence="1"/>
<dbReference type="EC" id="6.3.5.5" evidence="1"/>
<dbReference type="EMBL" id="AE016853">
    <property type="protein sequence ID" value="AAO57949.1"/>
    <property type="molecule type" value="Genomic_DNA"/>
</dbReference>
<dbReference type="RefSeq" id="NP_794254.1">
    <property type="nucleotide sequence ID" value="NC_004578.1"/>
</dbReference>
<dbReference type="RefSeq" id="WP_007243709.1">
    <property type="nucleotide sequence ID" value="NC_004578.1"/>
</dbReference>
<dbReference type="SMR" id="Q87WP4"/>
<dbReference type="STRING" id="223283.PSPTO_4501"/>
<dbReference type="GeneID" id="61789765"/>
<dbReference type="KEGG" id="pst:PSPTO_4501"/>
<dbReference type="PATRIC" id="fig|223283.9.peg.4617"/>
<dbReference type="eggNOG" id="COG0458">
    <property type="taxonomic scope" value="Bacteria"/>
</dbReference>
<dbReference type="HOGENOM" id="CLU_000513_1_0_6"/>
<dbReference type="OrthoDB" id="9804197at2"/>
<dbReference type="PhylomeDB" id="Q87WP4"/>
<dbReference type="UniPathway" id="UPA00068">
    <property type="reaction ID" value="UER00171"/>
</dbReference>
<dbReference type="UniPathway" id="UPA00070">
    <property type="reaction ID" value="UER00115"/>
</dbReference>
<dbReference type="Proteomes" id="UP000002515">
    <property type="component" value="Chromosome"/>
</dbReference>
<dbReference type="GO" id="GO:0005737">
    <property type="term" value="C:cytoplasm"/>
    <property type="evidence" value="ECO:0007669"/>
    <property type="project" value="TreeGrafter"/>
</dbReference>
<dbReference type="GO" id="GO:0005524">
    <property type="term" value="F:ATP binding"/>
    <property type="evidence" value="ECO:0007669"/>
    <property type="project" value="UniProtKB-UniRule"/>
</dbReference>
<dbReference type="GO" id="GO:0004087">
    <property type="term" value="F:carbamoyl-phosphate synthase (ammonia) activity"/>
    <property type="evidence" value="ECO:0007669"/>
    <property type="project" value="RHEA"/>
</dbReference>
<dbReference type="GO" id="GO:0004088">
    <property type="term" value="F:carbamoyl-phosphate synthase (glutamine-hydrolyzing) activity"/>
    <property type="evidence" value="ECO:0007669"/>
    <property type="project" value="UniProtKB-UniRule"/>
</dbReference>
<dbReference type="GO" id="GO:0046872">
    <property type="term" value="F:metal ion binding"/>
    <property type="evidence" value="ECO:0007669"/>
    <property type="project" value="UniProtKB-KW"/>
</dbReference>
<dbReference type="GO" id="GO:0044205">
    <property type="term" value="P:'de novo' UMP biosynthetic process"/>
    <property type="evidence" value="ECO:0007669"/>
    <property type="project" value="UniProtKB-UniRule"/>
</dbReference>
<dbReference type="GO" id="GO:0006541">
    <property type="term" value="P:glutamine metabolic process"/>
    <property type="evidence" value="ECO:0007669"/>
    <property type="project" value="TreeGrafter"/>
</dbReference>
<dbReference type="GO" id="GO:0006526">
    <property type="term" value="P:L-arginine biosynthetic process"/>
    <property type="evidence" value="ECO:0007669"/>
    <property type="project" value="UniProtKB-UniRule"/>
</dbReference>
<dbReference type="CDD" id="cd01424">
    <property type="entry name" value="MGS_CPS_II"/>
    <property type="match status" value="1"/>
</dbReference>
<dbReference type="FunFam" id="1.10.1030.10:FF:000002">
    <property type="entry name" value="Carbamoyl-phosphate synthase large chain"/>
    <property type="match status" value="1"/>
</dbReference>
<dbReference type="FunFam" id="3.30.1490.20:FF:000001">
    <property type="entry name" value="Carbamoyl-phosphate synthase large chain"/>
    <property type="match status" value="1"/>
</dbReference>
<dbReference type="FunFam" id="3.30.470.20:FF:000007">
    <property type="entry name" value="Carbamoyl-phosphate synthase large chain"/>
    <property type="match status" value="1"/>
</dbReference>
<dbReference type="FunFam" id="3.30.470.20:FF:000013">
    <property type="entry name" value="Carbamoyl-phosphate synthase large chain"/>
    <property type="match status" value="1"/>
</dbReference>
<dbReference type="FunFam" id="3.40.50.1380:FF:000004">
    <property type="entry name" value="Carbamoyl-phosphate synthase large chain"/>
    <property type="match status" value="1"/>
</dbReference>
<dbReference type="FunFam" id="3.40.50.20:FF:000001">
    <property type="entry name" value="Carbamoyl-phosphate synthase large chain"/>
    <property type="match status" value="1"/>
</dbReference>
<dbReference type="FunFam" id="3.40.50.20:FF:000003">
    <property type="entry name" value="Carbamoyl-phosphate synthase large chain"/>
    <property type="match status" value="1"/>
</dbReference>
<dbReference type="Gene3D" id="3.40.50.20">
    <property type="match status" value="2"/>
</dbReference>
<dbReference type="Gene3D" id="3.30.470.20">
    <property type="entry name" value="ATP-grasp fold, B domain"/>
    <property type="match status" value="2"/>
</dbReference>
<dbReference type="Gene3D" id="1.10.1030.10">
    <property type="entry name" value="Carbamoyl-phosphate synthetase, large subunit oligomerisation domain"/>
    <property type="match status" value="1"/>
</dbReference>
<dbReference type="Gene3D" id="3.40.50.1380">
    <property type="entry name" value="Methylglyoxal synthase-like domain"/>
    <property type="match status" value="1"/>
</dbReference>
<dbReference type="HAMAP" id="MF_01210_A">
    <property type="entry name" value="CPSase_L_chain_A"/>
    <property type="match status" value="1"/>
</dbReference>
<dbReference type="HAMAP" id="MF_01210_B">
    <property type="entry name" value="CPSase_L_chain_B"/>
    <property type="match status" value="1"/>
</dbReference>
<dbReference type="InterPro" id="IPR011761">
    <property type="entry name" value="ATP-grasp"/>
</dbReference>
<dbReference type="InterPro" id="IPR006275">
    <property type="entry name" value="CarbamoylP_synth_lsu"/>
</dbReference>
<dbReference type="InterPro" id="IPR005480">
    <property type="entry name" value="CarbamoylP_synth_lsu_oligo"/>
</dbReference>
<dbReference type="InterPro" id="IPR036897">
    <property type="entry name" value="CarbamoylP_synth_lsu_oligo_sf"/>
</dbReference>
<dbReference type="InterPro" id="IPR005479">
    <property type="entry name" value="CbamoylP_synth_lsu-like_ATP-bd"/>
</dbReference>
<dbReference type="InterPro" id="IPR005483">
    <property type="entry name" value="CbamoylP_synth_lsu_CPSase_dom"/>
</dbReference>
<dbReference type="InterPro" id="IPR011607">
    <property type="entry name" value="MGS-like_dom"/>
</dbReference>
<dbReference type="InterPro" id="IPR036914">
    <property type="entry name" value="MGS-like_dom_sf"/>
</dbReference>
<dbReference type="InterPro" id="IPR033937">
    <property type="entry name" value="MGS_CPS_CarB"/>
</dbReference>
<dbReference type="InterPro" id="IPR016185">
    <property type="entry name" value="PreATP-grasp_dom_sf"/>
</dbReference>
<dbReference type="NCBIfam" id="TIGR01369">
    <property type="entry name" value="CPSaseII_lrg"/>
    <property type="match status" value="1"/>
</dbReference>
<dbReference type="NCBIfam" id="NF003671">
    <property type="entry name" value="PRK05294.1"/>
    <property type="match status" value="1"/>
</dbReference>
<dbReference type="NCBIfam" id="NF009455">
    <property type="entry name" value="PRK12815.1"/>
    <property type="match status" value="1"/>
</dbReference>
<dbReference type="PANTHER" id="PTHR11405:SF53">
    <property type="entry name" value="CARBAMOYL-PHOSPHATE SYNTHASE [AMMONIA], MITOCHONDRIAL"/>
    <property type="match status" value="1"/>
</dbReference>
<dbReference type="PANTHER" id="PTHR11405">
    <property type="entry name" value="CARBAMOYLTRANSFERASE FAMILY MEMBER"/>
    <property type="match status" value="1"/>
</dbReference>
<dbReference type="Pfam" id="PF02786">
    <property type="entry name" value="CPSase_L_D2"/>
    <property type="match status" value="2"/>
</dbReference>
<dbReference type="Pfam" id="PF02787">
    <property type="entry name" value="CPSase_L_D3"/>
    <property type="match status" value="1"/>
</dbReference>
<dbReference type="Pfam" id="PF02142">
    <property type="entry name" value="MGS"/>
    <property type="match status" value="1"/>
</dbReference>
<dbReference type="PRINTS" id="PR00098">
    <property type="entry name" value="CPSASE"/>
</dbReference>
<dbReference type="SMART" id="SM01096">
    <property type="entry name" value="CPSase_L_D3"/>
    <property type="match status" value="1"/>
</dbReference>
<dbReference type="SMART" id="SM00851">
    <property type="entry name" value="MGS"/>
    <property type="match status" value="1"/>
</dbReference>
<dbReference type="SUPFAM" id="SSF48108">
    <property type="entry name" value="Carbamoyl phosphate synthetase, large subunit connection domain"/>
    <property type="match status" value="1"/>
</dbReference>
<dbReference type="SUPFAM" id="SSF56059">
    <property type="entry name" value="Glutathione synthetase ATP-binding domain-like"/>
    <property type="match status" value="2"/>
</dbReference>
<dbReference type="SUPFAM" id="SSF52335">
    <property type="entry name" value="Methylglyoxal synthase-like"/>
    <property type="match status" value="1"/>
</dbReference>
<dbReference type="SUPFAM" id="SSF52440">
    <property type="entry name" value="PreATP-grasp domain"/>
    <property type="match status" value="2"/>
</dbReference>
<dbReference type="PROSITE" id="PS50975">
    <property type="entry name" value="ATP_GRASP"/>
    <property type="match status" value="2"/>
</dbReference>
<dbReference type="PROSITE" id="PS00866">
    <property type="entry name" value="CPSASE_1"/>
    <property type="match status" value="2"/>
</dbReference>
<dbReference type="PROSITE" id="PS00867">
    <property type="entry name" value="CPSASE_2"/>
    <property type="match status" value="2"/>
</dbReference>
<dbReference type="PROSITE" id="PS51855">
    <property type="entry name" value="MGS"/>
    <property type="match status" value="1"/>
</dbReference>
<organism>
    <name type="scientific">Pseudomonas syringae pv. tomato (strain ATCC BAA-871 / DC3000)</name>
    <dbReference type="NCBI Taxonomy" id="223283"/>
    <lineage>
        <taxon>Bacteria</taxon>
        <taxon>Pseudomonadati</taxon>
        <taxon>Pseudomonadota</taxon>
        <taxon>Gammaproteobacteria</taxon>
        <taxon>Pseudomonadales</taxon>
        <taxon>Pseudomonadaceae</taxon>
        <taxon>Pseudomonas</taxon>
    </lineage>
</organism>
<gene>
    <name evidence="1" type="primary">carB</name>
    <name type="ordered locus">PSPTO_4501</name>
</gene>
<feature type="chain" id="PRO_0000145030" description="Carbamoyl phosphate synthase large chain">
    <location>
        <begin position="1"/>
        <end position="1073"/>
    </location>
</feature>
<feature type="domain" description="ATP-grasp 1" evidence="1">
    <location>
        <begin position="133"/>
        <end position="328"/>
    </location>
</feature>
<feature type="domain" description="ATP-grasp 2" evidence="1">
    <location>
        <begin position="678"/>
        <end position="869"/>
    </location>
</feature>
<feature type="domain" description="MGS-like" evidence="1">
    <location>
        <begin position="936"/>
        <end position="1073"/>
    </location>
</feature>
<feature type="region of interest" description="Carboxyphosphate synthetic domain" evidence="1">
    <location>
        <begin position="1"/>
        <end position="403"/>
    </location>
</feature>
<feature type="region of interest" description="Oligomerization domain" evidence="1">
    <location>
        <begin position="404"/>
        <end position="553"/>
    </location>
</feature>
<feature type="region of interest" description="Carbamoyl phosphate synthetic domain" evidence="1">
    <location>
        <begin position="554"/>
        <end position="935"/>
    </location>
</feature>
<feature type="region of interest" description="Allosteric domain" evidence="1">
    <location>
        <begin position="936"/>
        <end position="1073"/>
    </location>
</feature>
<feature type="binding site" evidence="1">
    <location>
        <position position="129"/>
    </location>
    <ligand>
        <name>ATP</name>
        <dbReference type="ChEBI" id="CHEBI:30616"/>
        <label>1</label>
    </ligand>
</feature>
<feature type="binding site" evidence="1">
    <location>
        <position position="169"/>
    </location>
    <ligand>
        <name>ATP</name>
        <dbReference type="ChEBI" id="CHEBI:30616"/>
        <label>1</label>
    </ligand>
</feature>
<feature type="binding site" evidence="1">
    <location>
        <position position="175"/>
    </location>
    <ligand>
        <name>ATP</name>
        <dbReference type="ChEBI" id="CHEBI:30616"/>
        <label>1</label>
    </ligand>
</feature>
<feature type="binding site" evidence="1">
    <location>
        <position position="176"/>
    </location>
    <ligand>
        <name>ATP</name>
        <dbReference type="ChEBI" id="CHEBI:30616"/>
        <label>1</label>
    </ligand>
</feature>
<feature type="binding site" evidence="1">
    <location>
        <position position="208"/>
    </location>
    <ligand>
        <name>ATP</name>
        <dbReference type="ChEBI" id="CHEBI:30616"/>
        <label>1</label>
    </ligand>
</feature>
<feature type="binding site" evidence="1">
    <location>
        <position position="210"/>
    </location>
    <ligand>
        <name>ATP</name>
        <dbReference type="ChEBI" id="CHEBI:30616"/>
        <label>1</label>
    </ligand>
</feature>
<feature type="binding site" evidence="1">
    <location>
        <position position="215"/>
    </location>
    <ligand>
        <name>ATP</name>
        <dbReference type="ChEBI" id="CHEBI:30616"/>
        <label>1</label>
    </ligand>
</feature>
<feature type="binding site" evidence="1">
    <location>
        <position position="241"/>
    </location>
    <ligand>
        <name>ATP</name>
        <dbReference type="ChEBI" id="CHEBI:30616"/>
        <label>1</label>
    </ligand>
</feature>
<feature type="binding site" evidence="1">
    <location>
        <position position="242"/>
    </location>
    <ligand>
        <name>ATP</name>
        <dbReference type="ChEBI" id="CHEBI:30616"/>
        <label>1</label>
    </ligand>
</feature>
<feature type="binding site" evidence="1">
    <location>
        <position position="243"/>
    </location>
    <ligand>
        <name>ATP</name>
        <dbReference type="ChEBI" id="CHEBI:30616"/>
        <label>1</label>
    </ligand>
</feature>
<feature type="binding site" evidence="1">
    <location>
        <position position="285"/>
    </location>
    <ligand>
        <name>ATP</name>
        <dbReference type="ChEBI" id="CHEBI:30616"/>
        <label>1</label>
    </ligand>
</feature>
<feature type="binding site" evidence="1">
    <location>
        <position position="285"/>
    </location>
    <ligand>
        <name>Mg(2+)</name>
        <dbReference type="ChEBI" id="CHEBI:18420"/>
        <label>1</label>
    </ligand>
</feature>
<feature type="binding site" evidence="1">
    <location>
        <position position="285"/>
    </location>
    <ligand>
        <name>Mn(2+)</name>
        <dbReference type="ChEBI" id="CHEBI:29035"/>
        <label>1</label>
    </ligand>
</feature>
<feature type="binding site" evidence="1">
    <location>
        <position position="299"/>
    </location>
    <ligand>
        <name>ATP</name>
        <dbReference type="ChEBI" id="CHEBI:30616"/>
        <label>1</label>
    </ligand>
</feature>
<feature type="binding site" evidence="1">
    <location>
        <position position="299"/>
    </location>
    <ligand>
        <name>Mg(2+)</name>
        <dbReference type="ChEBI" id="CHEBI:18420"/>
        <label>1</label>
    </ligand>
</feature>
<feature type="binding site" evidence="1">
    <location>
        <position position="299"/>
    </location>
    <ligand>
        <name>Mg(2+)</name>
        <dbReference type="ChEBI" id="CHEBI:18420"/>
        <label>2</label>
    </ligand>
</feature>
<feature type="binding site" evidence="1">
    <location>
        <position position="299"/>
    </location>
    <ligand>
        <name>Mn(2+)</name>
        <dbReference type="ChEBI" id="CHEBI:29035"/>
        <label>1</label>
    </ligand>
</feature>
<feature type="binding site" evidence="1">
    <location>
        <position position="299"/>
    </location>
    <ligand>
        <name>Mn(2+)</name>
        <dbReference type="ChEBI" id="CHEBI:29035"/>
        <label>2</label>
    </ligand>
</feature>
<feature type="binding site" evidence="1">
    <location>
        <position position="301"/>
    </location>
    <ligand>
        <name>Mg(2+)</name>
        <dbReference type="ChEBI" id="CHEBI:18420"/>
        <label>2</label>
    </ligand>
</feature>
<feature type="binding site" evidence="1">
    <location>
        <position position="301"/>
    </location>
    <ligand>
        <name>Mn(2+)</name>
        <dbReference type="ChEBI" id="CHEBI:29035"/>
        <label>2</label>
    </ligand>
</feature>
<feature type="binding site" evidence="1">
    <location>
        <position position="714"/>
    </location>
    <ligand>
        <name>ATP</name>
        <dbReference type="ChEBI" id="CHEBI:30616"/>
        <label>2</label>
    </ligand>
</feature>
<feature type="binding site" evidence="1">
    <location>
        <position position="753"/>
    </location>
    <ligand>
        <name>ATP</name>
        <dbReference type="ChEBI" id="CHEBI:30616"/>
        <label>2</label>
    </ligand>
</feature>
<feature type="binding site" evidence="1">
    <location>
        <position position="755"/>
    </location>
    <ligand>
        <name>ATP</name>
        <dbReference type="ChEBI" id="CHEBI:30616"/>
        <label>2</label>
    </ligand>
</feature>
<feature type="binding site" evidence="1">
    <location>
        <position position="760"/>
    </location>
    <ligand>
        <name>ATP</name>
        <dbReference type="ChEBI" id="CHEBI:30616"/>
        <label>2</label>
    </ligand>
</feature>
<feature type="binding site" evidence="1">
    <location>
        <position position="785"/>
    </location>
    <ligand>
        <name>ATP</name>
        <dbReference type="ChEBI" id="CHEBI:30616"/>
        <label>2</label>
    </ligand>
</feature>
<feature type="binding site" evidence="1">
    <location>
        <position position="786"/>
    </location>
    <ligand>
        <name>ATP</name>
        <dbReference type="ChEBI" id="CHEBI:30616"/>
        <label>2</label>
    </ligand>
</feature>
<feature type="binding site" evidence="1">
    <location>
        <position position="787"/>
    </location>
    <ligand>
        <name>ATP</name>
        <dbReference type="ChEBI" id="CHEBI:30616"/>
        <label>2</label>
    </ligand>
</feature>
<feature type="binding site" evidence="1">
    <location>
        <position position="788"/>
    </location>
    <ligand>
        <name>ATP</name>
        <dbReference type="ChEBI" id="CHEBI:30616"/>
        <label>2</label>
    </ligand>
</feature>
<feature type="binding site" evidence="1">
    <location>
        <position position="828"/>
    </location>
    <ligand>
        <name>ATP</name>
        <dbReference type="ChEBI" id="CHEBI:30616"/>
        <label>2</label>
    </ligand>
</feature>
<feature type="binding site" evidence="1">
    <location>
        <position position="828"/>
    </location>
    <ligand>
        <name>Mg(2+)</name>
        <dbReference type="ChEBI" id="CHEBI:18420"/>
        <label>3</label>
    </ligand>
</feature>
<feature type="binding site" evidence="1">
    <location>
        <position position="828"/>
    </location>
    <ligand>
        <name>Mn(2+)</name>
        <dbReference type="ChEBI" id="CHEBI:29035"/>
        <label>3</label>
    </ligand>
</feature>
<feature type="binding site" evidence="1">
    <location>
        <position position="840"/>
    </location>
    <ligand>
        <name>ATP</name>
        <dbReference type="ChEBI" id="CHEBI:30616"/>
        <label>2</label>
    </ligand>
</feature>
<feature type="binding site" evidence="1">
    <location>
        <position position="840"/>
    </location>
    <ligand>
        <name>Mg(2+)</name>
        <dbReference type="ChEBI" id="CHEBI:18420"/>
        <label>3</label>
    </ligand>
</feature>
<feature type="binding site" evidence="1">
    <location>
        <position position="840"/>
    </location>
    <ligand>
        <name>Mg(2+)</name>
        <dbReference type="ChEBI" id="CHEBI:18420"/>
        <label>4</label>
    </ligand>
</feature>
<feature type="binding site" evidence="1">
    <location>
        <position position="840"/>
    </location>
    <ligand>
        <name>Mn(2+)</name>
        <dbReference type="ChEBI" id="CHEBI:29035"/>
        <label>3</label>
    </ligand>
</feature>
<feature type="binding site" evidence="1">
    <location>
        <position position="840"/>
    </location>
    <ligand>
        <name>Mn(2+)</name>
        <dbReference type="ChEBI" id="CHEBI:29035"/>
        <label>4</label>
    </ligand>
</feature>
<feature type="binding site" evidence="1">
    <location>
        <position position="842"/>
    </location>
    <ligand>
        <name>Mg(2+)</name>
        <dbReference type="ChEBI" id="CHEBI:18420"/>
        <label>4</label>
    </ligand>
</feature>
<feature type="binding site" evidence="1">
    <location>
        <position position="842"/>
    </location>
    <ligand>
        <name>Mn(2+)</name>
        <dbReference type="ChEBI" id="CHEBI:29035"/>
        <label>4</label>
    </ligand>
</feature>
<keyword id="KW-0028">Amino-acid biosynthesis</keyword>
<keyword id="KW-0055">Arginine biosynthesis</keyword>
<keyword id="KW-0067">ATP-binding</keyword>
<keyword id="KW-0436">Ligase</keyword>
<keyword id="KW-0460">Magnesium</keyword>
<keyword id="KW-0464">Manganese</keyword>
<keyword id="KW-0479">Metal-binding</keyword>
<keyword id="KW-0547">Nucleotide-binding</keyword>
<keyword id="KW-0665">Pyrimidine biosynthesis</keyword>
<keyword id="KW-1185">Reference proteome</keyword>
<keyword id="KW-0677">Repeat</keyword>
<evidence type="ECO:0000255" key="1">
    <source>
        <dbReference type="HAMAP-Rule" id="MF_01210"/>
    </source>
</evidence>
<protein>
    <recommendedName>
        <fullName evidence="1">Carbamoyl phosphate synthase large chain</fullName>
        <ecNumber evidence="1">6.3.4.16</ecNumber>
        <ecNumber evidence="1">6.3.5.5</ecNumber>
    </recommendedName>
    <alternativeName>
        <fullName evidence="1">Carbamoyl phosphate synthetase ammonia chain</fullName>
    </alternativeName>
</protein>
<accession>Q87WP4</accession>
<comment type="function">
    <text evidence="1">Large subunit of the glutamine-dependent carbamoyl phosphate synthetase (CPSase). CPSase catalyzes the formation of carbamoyl phosphate from the ammonia moiety of glutamine, carbonate, and phosphate donated by ATP, constituting the first step of 2 biosynthetic pathways, one leading to arginine and/or urea and the other to pyrimidine nucleotides. The large subunit (synthetase) binds the substrates ammonia (free or transferred from glutamine from the small subunit), hydrogencarbonate and ATP and carries out an ATP-coupled ligase reaction, activating hydrogencarbonate by forming carboxy phosphate which reacts with ammonia to form carbamoyl phosphate.</text>
</comment>
<comment type="catalytic activity">
    <reaction evidence="1">
        <text>hydrogencarbonate + L-glutamine + 2 ATP + H2O = carbamoyl phosphate + L-glutamate + 2 ADP + phosphate + 2 H(+)</text>
        <dbReference type="Rhea" id="RHEA:18633"/>
        <dbReference type="ChEBI" id="CHEBI:15377"/>
        <dbReference type="ChEBI" id="CHEBI:15378"/>
        <dbReference type="ChEBI" id="CHEBI:17544"/>
        <dbReference type="ChEBI" id="CHEBI:29985"/>
        <dbReference type="ChEBI" id="CHEBI:30616"/>
        <dbReference type="ChEBI" id="CHEBI:43474"/>
        <dbReference type="ChEBI" id="CHEBI:58228"/>
        <dbReference type="ChEBI" id="CHEBI:58359"/>
        <dbReference type="ChEBI" id="CHEBI:456216"/>
        <dbReference type="EC" id="6.3.5.5"/>
    </reaction>
</comment>
<comment type="catalytic activity">
    <molecule>Carbamoyl phosphate synthase large chain</molecule>
    <reaction evidence="1">
        <text>hydrogencarbonate + NH4(+) + 2 ATP = carbamoyl phosphate + 2 ADP + phosphate + 2 H(+)</text>
        <dbReference type="Rhea" id="RHEA:18029"/>
        <dbReference type="ChEBI" id="CHEBI:15378"/>
        <dbReference type="ChEBI" id="CHEBI:17544"/>
        <dbReference type="ChEBI" id="CHEBI:28938"/>
        <dbReference type="ChEBI" id="CHEBI:30616"/>
        <dbReference type="ChEBI" id="CHEBI:43474"/>
        <dbReference type="ChEBI" id="CHEBI:58228"/>
        <dbReference type="ChEBI" id="CHEBI:456216"/>
        <dbReference type="EC" id="6.3.4.16"/>
    </reaction>
</comment>
<comment type="cofactor">
    <cofactor evidence="1">
        <name>Mg(2+)</name>
        <dbReference type="ChEBI" id="CHEBI:18420"/>
    </cofactor>
    <cofactor evidence="1">
        <name>Mn(2+)</name>
        <dbReference type="ChEBI" id="CHEBI:29035"/>
    </cofactor>
    <text evidence="1">Binds 4 Mg(2+) or Mn(2+) ions per subunit.</text>
</comment>
<comment type="pathway">
    <text evidence="1">Amino-acid biosynthesis; L-arginine biosynthesis; carbamoyl phosphate from bicarbonate: step 1/1.</text>
</comment>
<comment type="pathway">
    <text evidence="1">Pyrimidine metabolism; UMP biosynthesis via de novo pathway; (S)-dihydroorotate from bicarbonate: step 1/3.</text>
</comment>
<comment type="subunit">
    <text evidence="1">Composed of two chains; the small (or glutamine) chain promotes the hydrolysis of glutamine to ammonia, which is used by the large (or ammonia) chain to synthesize carbamoyl phosphate. Tetramer of heterodimers (alpha,beta)4.</text>
</comment>
<comment type="domain">
    <text evidence="1">The large subunit is composed of 2 ATP-grasp domains that are involved in binding the 2 ATP molecules needed for carbamoyl phosphate synthesis. The N-terminal ATP-grasp domain (referred to as the carboxyphosphate synthetic component) catalyzes the ATP-dependent phosphorylation of hydrogencarbonate to carboxyphosphate and the subsequent nucleophilic attack by ammonia to form a carbamate intermediate. The C-terminal ATP-grasp domain (referred to as the carbamoyl phosphate synthetic component) then catalyzes the phosphorylation of carbamate with the second ATP to form the end product carbamoyl phosphate. The reactive and unstable enzyme intermediates are sequentially channeled from one active site to the next through the interior of the protein over a distance of at least 96 A.</text>
</comment>
<comment type="similarity">
    <text evidence="1">Belongs to the CarB family.</text>
</comment>
<proteinExistence type="inferred from homology"/>
<name>CARB_PSESM</name>